<proteinExistence type="inferred from homology"/>
<sequence>MRHGKKINHLSRQTGHRKAMLANMACSLIEHKRINTTVAKAKALKQFVEPLITKSKEDTTHNRRIVFAYLRSKYAVTDLFRDVAAKVGDRPGGYTRIIKVGNRLGDNADMAMIELVDFNELYNGGKKEVKKAKSRRGGKAKKAEGTAPEAPAAESESTTEASE</sequence>
<name>RL17_FLAJ1</name>
<dbReference type="EMBL" id="CP000685">
    <property type="protein sequence ID" value="ABQ03406.1"/>
    <property type="molecule type" value="Genomic_DNA"/>
</dbReference>
<dbReference type="RefSeq" id="WP_012022476.1">
    <property type="nucleotide sequence ID" value="NZ_MUGZ01000005.1"/>
</dbReference>
<dbReference type="SMR" id="A5FN14"/>
<dbReference type="STRING" id="376686.Fjoh_0370"/>
<dbReference type="KEGG" id="fjo:Fjoh_0370"/>
<dbReference type="eggNOG" id="COG0203">
    <property type="taxonomic scope" value="Bacteria"/>
</dbReference>
<dbReference type="HOGENOM" id="CLU_074407_0_1_10"/>
<dbReference type="OrthoDB" id="9809073at2"/>
<dbReference type="Proteomes" id="UP000006694">
    <property type="component" value="Chromosome"/>
</dbReference>
<dbReference type="GO" id="GO:0022625">
    <property type="term" value="C:cytosolic large ribosomal subunit"/>
    <property type="evidence" value="ECO:0007669"/>
    <property type="project" value="TreeGrafter"/>
</dbReference>
<dbReference type="GO" id="GO:0003735">
    <property type="term" value="F:structural constituent of ribosome"/>
    <property type="evidence" value="ECO:0007669"/>
    <property type="project" value="InterPro"/>
</dbReference>
<dbReference type="GO" id="GO:0006412">
    <property type="term" value="P:translation"/>
    <property type="evidence" value="ECO:0007669"/>
    <property type="project" value="UniProtKB-UniRule"/>
</dbReference>
<dbReference type="FunFam" id="3.90.1030.10:FF:000006">
    <property type="entry name" value="50S ribosomal protein L17"/>
    <property type="match status" value="1"/>
</dbReference>
<dbReference type="Gene3D" id="3.90.1030.10">
    <property type="entry name" value="Ribosomal protein L17"/>
    <property type="match status" value="1"/>
</dbReference>
<dbReference type="HAMAP" id="MF_01368">
    <property type="entry name" value="Ribosomal_bL17"/>
    <property type="match status" value="1"/>
</dbReference>
<dbReference type="InterPro" id="IPR000456">
    <property type="entry name" value="Ribosomal_bL17"/>
</dbReference>
<dbReference type="InterPro" id="IPR047859">
    <property type="entry name" value="Ribosomal_bL17_CS"/>
</dbReference>
<dbReference type="InterPro" id="IPR036373">
    <property type="entry name" value="Ribosomal_bL17_sf"/>
</dbReference>
<dbReference type="NCBIfam" id="TIGR00059">
    <property type="entry name" value="L17"/>
    <property type="match status" value="1"/>
</dbReference>
<dbReference type="PANTHER" id="PTHR14413:SF16">
    <property type="entry name" value="LARGE RIBOSOMAL SUBUNIT PROTEIN BL17M"/>
    <property type="match status" value="1"/>
</dbReference>
<dbReference type="PANTHER" id="PTHR14413">
    <property type="entry name" value="RIBOSOMAL PROTEIN L17"/>
    <property type="match status" value="1"/>
</dbReference>
<dbReference type="Pfam" id="PF01196">
    <property type="entry name" value="Ribosomal_L17"/>
    <property type="match status" value="1"/>
</dbReference>
<dbReference type="SUPFAM" id="SSF64263">
    <property type="entry name" value="Prokaryotic ribosomal protein L17"/>
    <property type="match status" value="1"/>
</dbReference>
<dbReference type="PROSITE" id="PS01167">
    <property type="entry name" value="RIBOSOMAL_L17"/>
    <property type="match status" value="1"/>
</dbReference>
<gene>
    <name evidence="1" type="primary">rplQ</name>
    <name type="ordered locus">Fjoh_0370</name>
</gene>
<protein>
    <recommendedName>
        <fullName evidence="1">Large ribosomal subunit protein bL17</fullName>
    </recommendedName>
    <alternativeName>
        <fullName evidence="3">50S ribosomal protein L17</fullName>
    </alternativeName>
</protein>
<feature type="chain" id="PRO_1000087172" description="Large ribosomal subunit protein bL17">
    <location>
        <begin position="1"/>
        <end position="163"/>
    </location>
</feature>
<feature type="region of interest" description="Disordered" evidence="2">
    <location>
        <begin position="127"/>
        <end position="163"/>
    </location>
</feature>
<feature type="compositionally biased region" description="Basic residues" evidence="2">
    <location>
        <begin position="128"/>
        <end position="140"/>
    </location>
</feature>
<feature type="compositionally biased region" description="Low complexity" evidence="2">
    <location>
        <begin position="145"/>
        <end position="163"/>
    </location>
</feature>
<accession>A5FN14</accession>
<keyword id="KW-0687">Ribonucleoprotein</keyword>
<keyword id="KW-0689">Ribosomal protein</keyword>
<organism>
    <name type="scientific">Flavobacterium johnsoniae (strain ATCC 17061 / DSM 2064 / JCM 8514 / BCRC 14874 / CCUG 350202 / NBRC 14942 / NCIMB 11054 / UW101)</name>
    <name type="common">Cytophaga johnsonae</name>
    <dbReference type="NCBI Taxonomy" id="376686"/>
    <lineage>
        <taxon>Bacteria</taxon>
        <taxon>Pseudomonadati</taxon>
        <taxon>Bacteroidota</taxon>
        <taxon>Flavobacteriia</taxon>
        <taxon>Flavobacteriales</taxon>
        <taxon>Flavobacteriaceae</taxon>
        <taxon>Flavobacterium</taxon>
    </lineage>
</organism>
<comment type="subunit">
    <text evidence="1">Part of the 50S ribosomal subunit. Contacts protein L32.</text>
</comment>
<comment type="similarity">
    <text evidence="1">Belongs to the bacterial ribosomal protein bL17 family.</text>
</comment>
<evidence type="ECO:0000255" key="1">
    <source>
        <dbReference type="HAMAP-Rule" id="MF_01368"/>
    </source>
</evidence>
<evidence type="ECO:0000256" key="2">
    <source>
        <dbReference type="SAM" id="MobiDB-lite"/>
    </source>
</evidence>
<evidence type="ECO:0000305" key="3"/>
<reference key="1">
    <citation type="journal article" date="2009" name="Appl. Environ. Microbiol.">
        <title>Novel features of the polysaccharide-digesting gliding bacterium Flavobacterium johnsoniae as revealed by genome sequence analysis.</title>
        <authorList>
            <person name="McBride M.J."/>
            <person name="Xie G."/>
            <person name="Martens E.C."/>
            <person name="Lapidus A."/>
            <person name="Henrissat B."/>
            <person name="Rhodes R.G."/>
            <person name="Goltsman E."/>
            <person name="Wang W."/>
            <person name="Xu J."/>
            <person name="Hunnicutt D.W."/>
            <person name="Staroscik A.M."/>
            <person name="Hoover T.R."/>
            <person name="Cheng Y.Q."/>
            <person name="Stein J.L."/>
        </authorList>
    </citation>
    <scope>NUCLEOTIDE SEQUENCE [LARGE SCALE GENOMIC DNA]</scope>
    <source>
        <strain>ATCC 17061 / DSM 2064 / JCM 8514 / BCRC 14874 / CCUG 350202 / NBRC 14942 / NCIMB 11054 / UW101</strain>
    </source>
</reference>